<reference key="1">
    <citation type="journal article" date="2008" name="PLoS Genet.">
        <title>The genome of Borrelia recurrentis, the agent of deadly louse-borne relapsing fever, is a degraded subset of tick-borne Borrelia duttonii.</title>
        <authorList>
            <person name="Lescot M."/>
            <person name="Audic S."/>
            <person name="Robert C."/>
            <person name="Nguyen T.T."/>
            <person name="Blanc G."/>
            <person name="Cutler S.J."/>
            <person name="Wincker P."/>
            <person name="Couloux A."/>
            <person name="Claverie J.-M."/>
            <person name="Raoult D."/>
            <person name="Drancourt M."/>
        </authorList>
    </citation>
    <scope>NUCLEOTIDE SEQUENCE [LARGE SCALE GENOMIC DNA]</scope>
    <source>
        <strain>Ly</strain>
    </source>
</reference>
<evidence type="ECO:0000255" key="1">
    <source>
        <dbReference type="HAMAP-Rule" id="MF_01445"/>
    </source>
</evidence>
<dbReference type="EC" id="2.3.1.234" evidence="1"/>
<dbReference type="EMBL" id="CP000976">
    <property type="protein sequence ID" value="ACH93696.1"/>
    <property type="molecule type" value="Genomic_DNA"/>
</dbReference>
<dbReference type="RefSeq" id="WP_012538505.1">
    <property type="nucleotide sequence ID" value="NC_011229.1"/>
</dbReference>
<dbReference type="SMR" id="B5RMW0"/>
<dbReference type="STRING" id="412419.BDU_773"/>
<dbReference type="KEGG" id="bdu:BDU_773"/>
<dbReference type="eggNOG" id="COG0533">
    <property type="taxonomic scope" value="Bacteria"/>
</dbReference>
<dbReference type="HOGENOM" id="CLU_023208_0_2_12"/>
<dbReference type="OrthoDB" id="9806197at2"/>
<dbReference type="Proteomes" id="UP000000611">
    <property type="component" value="Chromosome"/>
</dbReference>
<dbReference type="GO" id="GO:0005737">
    <property type="term" value="C:cytoplasm"/>
    <property type="evidence" value="ECO:0007669"/>
    <property type="project" value="UniProtKB-SubCell"/>
</dbReference>
<dbReference type="GO" id="GO:0005506">
    <property type="term" value="F:iron ion binding"/>
    <property type="evidence" value="ECO:0007669"/>
    <property type="project" value="UniProtKB-UniRule"/>
</dbReference>
<dbReference type="GO" id="GO:0061711">
    <property type="term" value="F:N(6)-L-threonylcarbamoyladenine synthase activity"/>
    <property type="evidence" value="ECO:0007669"/>
    <property type="project" value="UniProtKB-EC"/>
</dbReference>
<dbReference type="GO" id="GO:0002949">
    <property type="term" value="P:tRNA threonylcarbamoyladenosine modification"/>
    <property type="evidence" value="ECO:0007669"/>
    <property type="project" value="UniProtKB-UniRule"/>
</dbReference>
<dbReference type="CDD" id="cd24133">
    <property type="entry name" value="ASKHA_NBD_TsaD_bac"/>
    <property type="match status" value="1"/>
</dbReference>
<dbReference type="FunFam" id="3.30.420.40:FF:000012">
    <property type="entry name" value="tRNA N6-adenosine threonylcarbamoyltransferase"/>
    <property type="match status" value="1"/>
</dbReference>
<dbReference type="Gene3D" id="3.30.420.40">
    <property type="match status" value="2"/>
</dbReference>
<dbReference type="HAMAP" id="MF_01445">
    <property type="entry name" value="TsaD"/>
    <property type="match status" value="1"/>
</dbReference>
<dbReference type="InterPro" id="IPR043129">
    <property type="entry name" value="ATPase_NBD"/>
</dbReference>
<dbReference type="InterPro" id="IPR000905">
    <property type="entry name" value="Gcp-like_dom"/>
</dbReference>
<dbReference type="InterPro" id="IPR017861">
    <property type="entry name" value="KAE1/TsaD"/>
</dbReference>
<dbReference type="InterPro" id="IPR017860">
    <property type="entry name" value="Peptidase_M22_CS"/>
</dbReference>
<dbReference type="InterPro" id="IPR022450">
    <property type="entry name" value="TsaD"/>
</dbReference>
<dbReference type="NCBIfam" id="TIGR00329">
    <property type="entry name" value="gcp_kae1"/>
    <property type="match status" value="1"/>
</dbReference>
<dbReference type="NCBIfam" id="TIGR03723">
    <property type="entry name" value="T6A_TsaD_YgjD"/>
    <property type="match status" value="1"/>
</dbReference>
<dbReference type="PANTHER" id="PTHR11735">
    <property type="entry name" value="TRNA N6-ADENOSINE THREONYLCARBAMOYLTRANSFERASE"/>
    <property type="match status" value="1"/>
</dbReference>
<dbReference type="PANTHER" id="PTHR11735:SF6">
    <property type="entry name" value="TRNA N6-ADENOSINE THREONYLCARBAMOYLTRANSFERASE, MITOCHONDRIAL"/>
    <property type="match status" value="1"/>
</dbReference>
<dbReference type="Pfam" id="PF00814">
    <property type="entry name" value="TsaD"/>
    <property type="match status" value="1"/>
</dbReference>
<dbReference type="PRINTS" id="PR00789">
    <property type="entry name" value="OSIALOPTASE"/>
</dbReference>
<dbReference type="SUPFAM" id="SSF53067">
    <property type="entry name" value="Actin-like ATPase domain"/>
    <property type="match status" value="1"/>
</dbReference>
<dbReference type="PROSITE" id="PS01016">
    <property type="entry name" value="GLYCOPROTEASE"/>
    <property type="match status" value="1"/>
</dbReference>
<keyword id="KW-0012">Acyltransferase</keyword>
<keyword id="KW-0963">Cytoplasm</keyword>
<keyword id="KW-0408">Iron</keyword>
<keyword id="KW-0479">Metal-binding</keyword>
<keyword id="KW-0808">Transferase</keyword>
<keyword id="KW-0819">tRNA processing</keyword>
<name>TSAD_BORDL</name>
<feature type="chain" id="PRO_1000145949" description="tRNA N6-adenosine threonylcarbamoyltransferase">
    <location>
        <begin position="1"/>
        <end position="338"/>
    </location>
</feature>
<feature type="binding site" evidence="1">
    <location>
        <position position="110"/>
    </location>
    <ligand>
        <name>Fe cation</name>
        <dbReference type="ChEBI" id="CHEBI:24875"/>
    </ligand>
</feature>
<feature type="binding site" evidence="1">
    <location>
        <position position="114"/>
    </location>
    <ligand>
        <name>Fe cation</name>
        <dbReference type="ChEBI" id="CHEBI:24875"/>
    </ligand>
</feature>
<feature type="binding site" evidence="1">
    <location>
        <begin position="132"/>
        <end position="136"/>
    </location>
    <ligand>
        <name>substrate</name>
    </ligand>
</feature>
<feature type="binding site" evidence="1">
    <location>
        <position position="165"/>
    </location>
    <ligand>
        <name>substrate</name>
    </ligand>
</feature>
<feature type="binding site" evidence="1">
    <location>
        <position position="178"/>
    </location>
    <ligand>
        <name>substrate</name>
    </ligand>
</feature>
<feature type="binding site" evidence="1">
    <location>
        <position position="274"/>
    </location>
    <ligand>
        <name>substrate</name>
    </ligand>
</feature>
<feature type="binding site" evidence="1">
    <location>
        <position position="298"/>
    </location>
    <ligand>
        <name>Fe cation</name>
        <dbReference type="ChEBI" id="CHEBI:24875"/>
    </ligand>
</feature>
<comment type="function">
    <text evidence="1">Required for the formation of a threonylcarbamoyl group on adenosine at position 37 (t(6)A37) in tRNAs that read codons beginning with adenine. Is involved in the transfer of the threonylcarbamoyl moiety of threonylcarbamoyl-AMP (TC-AMP) to the N6 group of A37, together with TsaE and TsaB. TsaD likely plays a direct catalytic role in this reaction.</text>
</comment>
<comment type="catalytic activity">
    <reaction evidence="1">
        <text>L-threonylcarbamoyladenylate + adenosine(37) in tRNA = N(6)-L-threonylcarbamoyladenosine(37) in tRNA + AMP + H(+)</text>
        <dbReference type="Rhea" id="RHEA:37059"/>
        <dbReference type="Rhea" id="RHEA-COMP:10162"/>
        <dbReference type="Rhea" id="RHEA-COMP:10163"/>
        <dbReference type="ChEBI" id="CHEBI:15378"/>
        <dbReference type="ChEBI" id="CHEBI:73682"/>
        <dbReference type="ChEBI" id="CHEBI:74411"/>
        <dbReference type="ChEBI" id="CHEBI:74418"/>
        <dbReference type="ChEBI" id="CHEBI:456215"/>
        <dbReference type="EC" id="2.3.1.234"/>
    </reaction>
</comment>
<comment type="cofactor">
    <cofactor evidence="1">
        <name>Fe(2+)</name>
        <dbReference type="ChEBI" id="CHEBI:29033"/>
    </cofactor>
    <text evidence="1">Binds 1 Fe(2+) ion per subunit.</text>
</comment>
<comment type="subcellular location">
    <subcellularLocation>
        <location evidence="1">Cytoplasm</location>
    </subcellularLocation>
</comment>
<comment type="similarity">
    <text evidence="1">Belongs to the KAE1 / TsaD family.</text>
</comment>
<accession>B5RMW0</accession>
<organism>
    <name type="scientific">Borrelia duttonii (strain Ly)</name>
    <dbReference type="NCBI Taxonomy" id="412419"/>
    <lineage>
        <taxon>Bacteria</taxon>
        <taxon>Pseudomonadati</taxon>
        <taxon>Spirochaetota</taxon>
        <taxon>Spirochaetia</taxon>
        <taxon>Spirochaetales</taxon>
        <taxon>Borreliaceae</taxon>
        <taxon>Borrelia</taxon>
    </lineage>
</organism>
<protein>
    <recommendedName>
        <fullName evidence="1">tRNA N6-adenosine threonylcarbamoyltransferase</fullName>
        <ecNumber evidence="1">2.3.1.234</ecNumber>
    </recommendedName>
    <alternativeName>
        <fullName evidence="1">N6-L-threonylcarbamoyladenine synthase</fullName>
        <shortName evidence="1">t(6)A synthase</shortName>
    </alternativeName>
    <alternativeName>
        <fullName evidence="1">t(6)A37 threonylcarbamoyladenosine biosynthesis protein TsaD</fullName>
    </alternativeName>
    <alternativeName>
        <fullName evidence="1">tRNA threonylcarbamoyladenosine biosynthesis protein TsaD</fullName>
    </alternativeName>
</protein>
<gene>
    <name evidence="1" type="primary">tsaD</name>
    <name type="synonym">gcp</name>
    <name type="ordered locus">BDU_773</name>
</gene>
<sequence>MKVLGIESSCDDCCAAIVENGNTILSNIKLSQKEHKKYYGIVPEIASRLHTEFIMYVCQQAIISAQINISEIDLIAVTSQPGLIGSLIVGVNFAKGLSIALKKPLICIDHILGHLYAPLLNHTIEYPFLSLVLSGGHTILAKQNNFDDIEILGRTLDDACGEAFDKIAKHYKMGFPGGPNIEKLAIDGNQYAFNFPITIFDKKENRYDFSYSGLKTACIHQLEKFKNNNAQITNNNIAASFQRAAFENLIIPIKRAIKDTNIKKLIISGGVASNLYLREKIKNLEIETYYPPIDLCTDNAAMIAGIGYLMYLKYGASSIETNANSRIENYKYTKGVKL</sequence>
<proteinExistence type="inferred from homology"/>